<reference key="1">
    <citation type="journal article" date="2003" name="Science">
        <title>A genomic view of the human-Bacteroides thetaiotaomicron symbiosis.</title>
        <authorList>
            <person name="Xu J."/>
            <person name="Bjursell M.K."/>
            <person name="Himrod J."/>
            <person name="Deng S."/>
            <person name="Carmichael L.K."/>
            <person name="Chiang H.C."/>
            <person name="Hooper L.V."/>
            <person name="Gordon J.I."/>
        </authorList>
    </citation>
    <scope>NUCLEOTIDE SEQUENCE [LARGE SCALE GENOMIC DNA]</scope>
    <source>
        <strain>ATCC 29148 / DSM 2079 / JCM 5827 / CCUG 10774 / NCTC 10582 / VPI-5482 / E50</strain>
    </source>
</reference>
<name>LPXZ_BACTN</name>
<sequence>MLKQKTLKDSFSLSGKGLHTGLDLTVTFNPAPDNHGYKIQRIDLEGQPTIDAVADNVTETTRGTVLSKNGVKVSTVEHGMAALYALGIDNCLIQVNGPEFPILDGSAQYYVQEIERVGTEEQSAVKDFYIIKSKIEFRDESTGSSIIVLPDENFSLNVLVSYDSTIIPNQFATLEDMHNFKDEVAASRTFVFVREIEPLLSAGLIKGGDLDNAIVIYERKMSQESYDKLADVMGVPHMDADQLGYINHKPLVWPNECARHKLLDVIGDLALIGKPIKGRIIATRPGHTINNKFARQMRKEIRLHEIQAPTYDCNREPVMDVNRIRELLPHRYPFQLVDKVIEMGASYIVGIKNITANEPFFQGHFPQEPVMPGVLQIEAMAQVGGLLVLNSVDEPERYSTYFMKIDGVKFRQKVVPGDTLLFRVELLAPIRRGISTMKGYAFVGEKVVCEAEFMAQIVKNK</sequence>
<protein>
    <recommendedName>
        <fullName>Bifunctional enzyme LpxC/FabZ</fullName>
    </recommendedName>
    <domain>
        <recommendedName>
            <fullName>UDP-3-O-acyl-N-acetylglucosamine deacetylase</fullName>
            <shortName>UDP-3-O-acyl-GlcNAc deacetylase</shortName>
            <ecNumber>3.5.1.108</ecNumber>
        </recommendedName>
        <alternativeName>
            <fullName>UDP-3-O-[R-3-hydroxymyristoyl]-N-acetylglucosamine deacetylase</fullName>
        </alternativeName>
    </domain>
    <domain>
        <recommendedName>
            <fullName>3-hydroxyacyl-[acyl-carrier-protein] dehydratase FabZ</fullName>
            <ecNumber>4.2.1.59</ecNumber>
        </recommendedName>
        <alternativeName>
            <fullName>(3R)-hydroxymyristoyl-[acyl-carrier-protein] dehydratase</fullName>
            <shortName>(3R)-hydroxymyristoyl-ACP dehydrase</shortName>
        </alternativeName>
        <alternativeName>
            <fullName>Beta-hydroxyacyl-ACP dehydratase</fullName>
        </alternativeName>
    </domain>
</protein>
<organism>
    <name type="scientific">Bacteroides thetaiotaomicron (strain ATCC 29148 / DSM 2079 / JCM 5827 / CCUG 10774 / NCTC 10582 / VPI-5482 / E50)</name>
    <dbReference type="NCBI Taxonomy" id="226186"/>
    <lineage>
        <taxon>Bacteria</taxon>
        <taxon>Pseudomonadati</taxon>
        <taxon>Bacteroidota</taxon>
        <taxon>Bacteroidia</taxon>
        <taxon>Bacteroidales</taxon>
        <taxon>Bacteroidaceae</taxon>
        <taxon>Bacteroides</taxon>
    </lineage>
</organism>
<gene>
    <name type="primary">lpxC/fabZ</name>
    <name type="ordered locus">BT_4206</name>
</gene>
<keyword id="KW-0963">Cytoplasm</keyword>
<keyword id="KW-0378">Hydrolase</keyword>
<keyword id="KW-0441">Lipid A biosynthesis</keyword>
<keyword id="KW-0444">Lipid biosynthesis</keyword>
<keyword id="KW-0443">Lipid metabolism</keyword>
<keyword id="KW-0456">Lyase</keyword>
<keyword id="KW-0479">Metal-binding</keyword>
<keyword id="KW-0511">Multifunctional enzyme</keyword>
<keyword id="KW-1185">Reference proteome</keyword>
<keyword id="KW-0862">Zinc</keyword>
<comment type="function">
    <text>Catalyzes the hydrolysis of UDP-3-O-myristoyl-N-acetylglucosamine to form UDP-3-O-myristoylglucosamine and acetate, the committed step in lipid A biosynthesis.</text>
</comment>
<comment type="function">
    <text evidence="1">Involved in unsaturated fatty acids biosynthesis. Catalyzes the dehydration of short chain beta-hydroxyacyl-ACPs and long chain saturated and unsaturated beta-hydroxyacyl-ACPs.</text>
</comment>
<comment type="catalytic activity">
    <reaction>
        <text>a UDP-3-O-[(3R)-3-hydroxyacyl]-N-acetyl-alpha-D-glucosamine + H2O = a UDP-3-O-[(3R)-3-hydroxyacyl]-alpha-D-glucosamine + acetate</text>
        <dbReference type="Rhea" id="RHEA:67816"/>
        <dbReference type="ChEBI" id="CHEBI:15377"/>
        <dbReference type="ChEBI" id="CHEBI:30089"/>
        <dbReference type="ChEBI" id="CHEBI:137740"/>
        <dbReference type="ChEBI" id="CHEBI:173225"/>
        <dbReference type="EC" id="3.5.1.108"/>
    </reaction>
</comment>
<comment type="catalytic activity">
    <reaction>
        <text>a (3R)-hydroxyacyl-[ACP] = a (2E)-enoyl-[ACP] + H2O</text>
        <dbReference type="Rhea" id="RHEA:13097"/>
        <dbReference type="Rhea" id="RHEA-COMP:9925"/>
        <dbReference type="Rhea" id="RHEA-COMP:9945"/>
        <dbReference type="ChEBI" id="CHEBI:15377"/>
        <dbReference type="ChEBI" id="CHEBI:78784"/>
        <dbReference type="ChEBI" id="CHEBI:78827"/>
        <dbReference type="EC" id="4.2.1.59"/>
    </reaction>
</comment>
<comment type="cofactor">
    <cofactor>
        <name>Zn(2+)</name>
        <dbReference type="ChEBI" id="CHEBI:29105"/>
    </cofactor>
</comment>
<comment type="pathway">
    <text>Glycolipid biosynthesis; lipid IV(A) biosynthesis; lipid IV(A) from (3R)-3-hydroxytetradecanoyl-[acyl-carrier-protein] and UDP-N-acetyl-alpha-D-glucosamine: step 2/6.</text>
</comment>
<comment type="subcellular location">
    <subcellularLocation>
        <location evidence="1">Cytoplasm</location>
    </subcellularLocation>
</comment>
<comment type="similarity">
    <text evidence="2">In the N-terminal section; belongs to the LpxC family.</text>
</comment>
<comment type="similarity">
    <text evidence="2">In the C-terminal section; belongs to the thioester dehydratase family.</text>
</comment>
<feature type="chain" id="PRO_0000191975" description="Bifunctional enzyme LpxC/FabZ">
    <location>
        <begin position="1"/>
        <end position="461"/>
    </location>
</feature>
<feature type="region of interest" description="UDP-3-O-acyl-N-acetylglucosamine deacetylase">
    <location>
        <begin position="1"/>
        <end position="302"/>
    </location>
</feature>
<feature type="region of interest" description="3-hydroxyacyl-[acyl-carrier-protein] dehydratase">
    <location>
        <begin position="303"/>
        <end position="461"/>
    </location>
</feature>
<feature type="active site" description="Proton donor" evidence="1">
    <location>
        <position position="287"/>
    </location>
</feature>
<feature type="active site" evidence="1">
    <location>
        <position position="364"/>
    </location>
</feature>
<feature type="binding site" evidence="1">
    <location>
        <position position="78"/>
    </location>
    <ligand>
        <name>Zn(2+)</name>
        <dbReference type="ChEBI" id="CHEBI:29105"/>
    </ligand>
</feature>
<feature type="binding site" evidence="1">
    <location>
        <position position="260"/>
    </location>
    <ligand>
        <name>Zn(2+)</name>
        <dbReference type="ChEBI" id="CHEBI:29105"/>
    </ligand>
</feature>
<feature type="binding site" evidence="1">
    <location>
        <position position="264"/>
    </location>
    <ligand>
        <name>Zn(2+)</name>
        <dbReference type="ChEBI" id="CHEBI:29105"/>
    </ligand>
</feature>
<accession>Q8A015</accession>
<proteinExistence type="inferred from homology"/>
<dbReference type="EC" id="3.5.1.108"/>
<dbReference type="EC" id="4.2.1.59"/>
<dbReference type="EMBL" id="AE015928">
    <property type="protein sequence ID" value="AAO79311.1"/>
    <property type="molecule type" value="Genomic_DNA"/>
</dbReference>
<dbReference type="RefSeq" id="NP_813117.1">
    <property type="nucleotide sequence ID" value="NC_004663.1"/>
</dbReference>
<dbReference type="RefSeq" id="WP_008759880.1">
    <property type="nucleotide sequence ID" value="NZ_UYXG01000012.1"/>
</dbReference>
<dbReference type="SMR" id="Q8A015"/>
<dbReference type="FunCoup" id="Q8A015">
    <property type="interactions" value="378"/>
</dbReference>
<dbReference type="STRING" id="226186.BT_4206"/>
<dbReference type="PaxDb" id="226186-BT_4206"/>
<dbReference type="EnsemblBacteria" id="AAO79311">
    <property type="protein sequence ID" value="AAO79311"/>
    <property type="gene ID" value="BT_4206"/>
</dbReference>
<dbReference type="KEGG" id="bth:BT_4206"/>
<dbReference type="PATRIC" id="fig|226186.12.peg.4273"/>
<dbReference type="eggNOG" id="COG0764">
    <property type="taxonomic scope" value="Bacteria"/>
</dbReference>
<dbReference type="eggNOG" id="COG0774">
    <property type="taxonomic scope" value="Bacteria"/>
</dbReference>
<dbReference type="HOGENOM" id="CLU_046528_2_0_10"/>
<dbReference type="InParanoid" id="Q8A015"/>
<dbReference type="OrthoDB" id="9772788at2"/>
<dbReference type="UniPathway" id="UPA00359">
    <property type="reaction ID" value="UER00478"/>
</dbReference>
<dbReference type="Proteomes" id="UP000001414">
    <property type="component" value="Chromosome"/>
</dbReference>
<dbReference type="GO" id="GO:0005737">
    <property type="term" value="C:cytoplasm"/>
    <property type="evidence" value="ECO:0007669"/>
    <property type="project" value="UniProtKB-SubCell"/>
</dbReference>
<dbReference type="GO" id="GO:0016020">
    <property type="term" value="C:membrane"/>
    <property type="evidence" value="ECO:0007669"/>
    <property type="project" value="GOC"/>
</dbReference>
<dbReference type="GO" id="GO:0019171">
    <property type="term" value="F:(3R)-hydroxyacyl-[acyl-carrier-protein] dehydratase activity"/>
    <property type="evidence" value="ECO:0007669"/>
    <property type="project" value="UniProtKB-EC"/>
</dbReference>
<dbReference type="GO" id="GO:0046872">
    <property type="term" value="F:metal ion binding"/>
    <property type="evidence" value="ECO:0007669"/>
    <property type="project" value="UniProtKB-KW"/>
</dbReference>
<dbReference type="GO" id="GO:0103117">
    <property type="term" value="F:UDP-3-O-acyl-N-acetylglucosamine deacetylase activity"/>
    <property type="evidence" value="ECO:0007669"/>
    <property type="project" value="UniProtKB-UniRule"/>
</dbReference>
<dbReference type="GO" id="GO:0006633">
    <property type="term" value="P:fatty acid biosynthetic process"/>
    <property type="evidence" value="ECO:0007669"/>
    <property type="project" value="UniProtKB-UniRule"/>
</dbReference>
<dbReference type="GO" id="GO:0009245">
    <property type="term" value="P:lipid A biosynthetic process"/>
    <property type="evidence" value="ECO:0007669"/>
    <property type="project" value="UniProtKB-UniRule"/>
</dbReference>
<dbReference type="CDD" id="cd01288">
    <property type="entry name" value="FabZ"/>
    <property type="match status" value="1"/>
</dbReference>
<dbReference type="FunFam" id="3.10.129.10:FF:000001">
    <property type="entry name" value="3-hydroxyacyl-[acyl-carrier-protein] dehydratase FabZ"/>
    <property type="match status" value="1"/>
</dbReference>
<dbReference type="Gene3D" id="3.10.129.10">
    <property type="entry name" value="Hotdog Thioesterase"/>
    <property type="match status" value="1"/>
</dbReference>
<dbReference type="Gene3D" id="3.30.230.20">
    <property type="entry name" value="lpxc deacetylase, domain 1"/>
    <property type="match status" value="1"/>
</dbReference>
<dbReference type="Gene3D" id="3.30.1700.10">
    <property type="entry name" value="lpxc deacetylase, domain 2"/>
    <property type="match status" value="1"/>
</dbReference>
<dbReference type="HAMAP" id="MF_00406">
    <property type="entry name" value="FabZ"/>
    <property type="match status" value="1"/>
</dbReference>
<dbReference type="HAMAP" id="MF_00388">
    <property type="entry name" value="LpxC"/>
    <property type="match status" value="1"/>
</dbReference>
<dbReference type="InterPro" id="IPR013114">
    <property type="entry name" value="FabA_FabZ"/>
</dbReference>
<dbReference type="InterPro" id="IPR010084">
    <property type="entry name" value="FabZ"/>
</dbReference>
<dbReference type="InterPro" id="IPR029069">
    <property type="entry name" value="HotDog_dom_sf"/>
</dbReference>
<dbReference type="InterPro" id="IPR020568">
    <property type="entry name" value="Ribosomal_Su5_D2-typ_SF"/>
</dbReference>
<dbReference type="InterPro" id="IPR004463">
    <property type="entry name" value="UDP-acyl_GlcNac_deAcase"/>
</dbReference>
<dbReference type="InterPro" id="IPR011334">
    <property type="entry name" value="UDP-acyl_GlcNac_deAcase_C"/>
</dbReference>
<dbReference type="InterPro" id="IPR015870">
    <property type="entry name" value="UDP-acyl_N-AcGlcN_deAcase_N"/>
</dbReference>
<dbReference type="NCBIfam" id="TIGR01750">
    <property type="entry name" value="fabZ"/>
    <property type="match status" value="1"/>
</dbReference>
<dbReference type="NCBIfam" id="TIGR00325">
    <property type="entry name" value="lpxC"/>
    <property type="match status" value="1"/>
</dbReference>
<dbReference type="NCBIfam" id="NF000582">
    <property type="entry name" value="PRK00006.1"/>
    <property type="match status" value="1"/>
</dbReference>
<dbReference type="NCBIfam" id="NF009667">
    <property type="entry name" value="PRK13188.1"/>
    <property type="match status" value="1"/>
</dbReference>
<dbReference type="PANTHER" id="PTHR30272">
    <property type="entry name" value="3-HYDROXYACYL-[ACYL-CARRIER-PROTEIN] DEHYDRATASE"/>
    <property type="match status" value="1"/>
</dbReference>
<dbReference type="PANTHER" id="PTHR30272:SF1">
    <property type="entry name" value="3-HYDROXYACYL-[ACYL-CARRIER-PROTEIN] DEHYDRATASE"/>
    <property type="match status" value="1"/>
</dbReference>
<dbReference type="Pfam" id="PF07977">
    <property type="entry name" value="FabA"/>
    <property type="match status" value="1"/>
</dbReference>
<dbReference type="Pfam" id="PF03331">
    <property type="entry name" value="LpxC"/>
    <property type="match status" value="1"/>
</dbReference>
<dbReference type="SUPFAM" id="SSF54211">
    <property type="entry name" value="Ribosomal protein S5 domain 2-like"/>
    <property type="match status" value="2"/>
</dbReference>
<dbReference type="SUPFAM" id="SSF54637">
    <property type="entry name" value="Thioesterase/thiol ester dehydrase-isomerase"/>
    <property type="match status" value="1"/>
</dbReference>
<evidence type="ECO:0000250" key="1"/>
<evidence type="ECO:0000305" key="2"/>